<accession>P0A6G7</accession>
<accession>P19245</accession>
<accession>Q2MBY9</accession>
<protein>
    <recommendedName>
        <fullName evidence="1">ATP-dependent Clp protease proteolytic subunit</fullName>
        <ecNumber evidence="1">3.4.21.92</ecNumber>
    </recommendedName>
    <alternativeName>
        <fullName>Caseinolytic protease</fullName>
    </alternativeName>
    <alternativeName>
        <fullName evidence="1">Endopeptidase Clp</fullName>
    </alternativeName>
    <alternativeName>
        <fullName>Heat shock protein F21.5</fullName>
    </alternativeName>
    <alternativeName>
        <fullName>Protease Ti</fullName>
    </alternativeName>
</protein>
<name>CLPP_ECOLI</name>
<evidence type="ECO:0000255" key="1">
    <source>
        <dbReference type="HAMAP-Rule" id="MF_00444"/>
    </source>
</evidence>
<evidence type="ECO:0000269" key="2">
    <source>
    </source>
</evidence>
<evidence type="ECO:0000269" key="3">
    <source>
    </source>
</evidence>
<evidence type="ECO:0000269" key="4">
    <source>
    </source>
</evidence>
<evidence type="ECO:0000269" key="5">
    <source>
    </source>
</evidence>
<evidence type="ECO:0000269" key="6">
    <source>
    </source>
</evidence>
<evidence type="ECO:0000269" key="7">
    <source>
    </source>
</evidence>
<evidence type="ECO:0000269" key="8">
    <source>
    </source>
</evidence>
<evidence type="ECO:0000269" key="9">
    <source>
    </source>
</evidence>
<evidence type="ECO:0000269" key="10">
    <source>
    </source>
</evidence>
<evidence type="ECO:0000269" key="11">
    <source>
    </source>
</evidence>
<evidence type="ECO:0000269" key="12">
    <source>
    </source>
</evidence>
<evidence type="ECO:0000305" key="13"/>
<evidence type="ECO:0000305" key="14">
    <source>
    </source>
</evidence>
<evidence type="ECO:0007829" key="15">
    <source>
        <dbReference type="PDB" id="1YG6"/>
    </source>
</evidence>
<evidence type="ECO:0007829" key="16">
    <source>
        <dbReference type="PDB" id="2FZS"/>
    </source>
</evidence>
<evidence type="ECO:0007829" key="17">
    <source>
        <dbReference type="PDB" id="3HLN"/>
    </source>
</evidence>
<evidence type="ECO:0007829" key="18">
    <source>
        <dbReference type="PDB" id="6NB1"/>
    </source>
</evidence>
<evidence type="ECO:0007829" key="19">
    <source>
        <dbReference type="PDB" id="7UIW"/>
    </source>
</evidence>
<comment type="function">
    <text evidence="1 2 3 10">Cleaves peptides in various proteins in a process that requires ATP hydrolysis. Has a chymotrypsin-like activity. Plays a major role in the degradation of misfolded proteins. May play the role of a master protease which is attracted to different substrates by different specificity factors such as ClpA or ClpX. Participates in the final steps of RseA-sigma-E degradation, liberating sigma-E to induce the extracytoplasmic-stress response. Degrades antitoxin MazE (PubMed:24375411).</text>
</comment>
<comment type="catalytic activity">
    <reaction evidence="1">
        <text>Hydrolysis of proteins to small peptides in the presence of ATP and magnesium. alpha-casein is the usual test substrate. In the absence of ATP, only oligopeptides shorter than five residues are hydrolyzed (such as succinyl-Leu-Tyr-|-NHMec, and Leu-Tyr-Leu-|-Tyr-Trp, in which cleavage of the -Tyr-|-Leu- and -Tyr-|-Trp bonds also occurs).</text>
        <dbReference type="EC" id="3.4.21.92"/>
    </reaction>
</comment>
<comment type="activity regulation">
    <text evidence="5">Inhibited by benzyloxycarbonyl leucyltyrosine chloromethylketone (Z-LY-CMK).</text>
</comment>
<comment type="biophysicochemical properties">
    <kinetics>
        <KM evidence="4 6">4.4 mM for N-succinyl-Leu-Tyr-7-amino-4-methyl-coumarin (N-succinyl-Leu-Tyr-AMC)</KM>
        <KM evidence="4 6">1 mM for N-succinyl-Leu-Tyr-AMC</KM>
    </kinetics>
</comment>
<comment type="subunit">
    <text evidence="1 4 5 6 7 12">Fourteen ClpP subunits assemble into 2 heptameric rings which stack back to back to give a disk-like structure with a central cavity, resembling the structure of eukaryotic proteasomes. Component of the ClpAP and ClpXP complexes.</text>
</comment>
<comment type="interaction">
    <interactant intactId="EBI-370625">
        <id>P0A6G7</id>
    </interactant>
    <interactant intactId="EBI-546140">
        <id>P0ABH9</id>
        <label>clpA</label>
    </interactant>
    <organismsDiffer>false</organismsDiffer>
    <experiments>11</experiments>
</comment>
<comment type="interaction">
    <interactant intactId="EBI-370625">
        <id>P0A6G7</id>
    </interactant>
    <interactant intactId="EBI-370625">
        <id>P0A6G7</id>
        <label>clpP</label>
    </interactant>
    <organismsDiffer>false</organismsDiffer>
    <experiments>9</experiments>
</comment>
<comment type="interaction">
    <interactant intactId="EBI-370625">
        <id>P0A6G7</id>
    </interactant>
    <interactant intactId="EBI-547386">
        <id>P0A6H1</id>
        <label>clpX</label>
    </interactant>
    <organismsDiffer>false</organismsDiffer>
    <experiments>5</experiments>
</comment>
<comment type="subcellular location">
    <subcellularLocation>
        <location>Cytoplasm</location>
    </subcellularLocation>
</comment>
<comment type="induction">
    <text evidence="11">By heat shock. Part of the clpP-clpX operon.</text>
</comment>
<comment type="domain">
    <text evidence="4">The N-terminus (residues 17-34) interact with ClpA and ClpX.</text>
</comment>
<comment type="disruption phenotype">
    <text evidence="9 10">Cells undergo an apoptotic-like death upon DNA damage characterized by membrane depolarization (PubMed:22412352). Decreased persister cell formation upon antibiotic challenge probably due to increased levels of MazF toxin (PubMed:24375411).</text>
</comment>
<comment type="miscellaneous">
    <text evidence="14">Acyldepsipeptide antibiotics bind in the ClpA or ClpX binding-sites, rendering the enzyme ATP-independent and indiscriminate, thus killing cells.</text>
</comment>
<comment type="similarity">
    <text evidence="1">Belongs to the peptidase S14 family.</text>
</comment>
<gene>
    <name evidence="1" type="primary">clpP</name>
    <name type="synonym">lopP</name>
    <name type="ordered locus">b0437</name>
    <name type="ordered locus">JW0427</name>
</gene>
<sequence length="207" mass="23187">MSYSGERDNFAPHMALVPMVIEQTSRGERSFDIYSRLLKERVIFLTGQVEDHMANLIVAQMLFLEAENPEKDIYLYINSPGGVITAGMSIYDTMQFIKPDVSTICMGQAASMGAFLLTAGAKGKRFCLPNSRVMIHQPLGGYQGQATDIEIHAREILKVKGRMNELMALHTGQSLEQIERDTERDRFLSAPEAVEYGLVDSILTHRN</sequence>
<keyword id="KW-0002">3D-structure</keyword>
<keyword id="KW-0963">Cytoplasm</keyword>
<keyword id="KW-0903">Direct protein sequencing</keyword>
<keyword id="KW-0378">Hydrolase</keyword>
<keyword id="KW-0645">Protease</keyword>
<keyword id="KW-1185">Reference proteome</keyword>
<keyword id="KW-0720">Serine protease</keyword>
<keyword id="KW-0346">Stress response</keyword>
<keyword id="KW-0865">Zymogen</keyword>
<proteinExistence type="evidence at protein level"/>
<feature type="propeptide" id="PRO_0000268012" evidence="8">
    <location>
        <begin position="1"/>
        <end position="14"/>
    </location>
</feature>
<feature type="chain" id="PRO_0000179551" description="ATP-dependent Clp protease proteolytic subunit">
    <location>
        <begin position="15"/>
        <end position="207"/>
    </location>
</feature>
<feature type="active site" description="Nucleophile" evidence="13">
    <location>
        <position position="111"/>
    </location>
</feature>
<feature type="active site" evidence="13">
    <location>
        <position position="136"/>
    </location>
</feature>
<feature type="active site" evidence="13">
    <location>
        <position position="185"/>
    </location>
</feature>
<feature type="mutagenesis site" description="No ClpA-ClpP, little ClpX-ClpP complex forms." evidence="4">
    <original>V</original>
    <variation>A</variation>
    <location>
        <position position="17"/>
    </location>
</feature>
<feature type="mutagenesis site" description="Reduced processing, no ClpA-ClpP complex forms." evidence="4">
    <original>P</original>
    <variation>A</variation>
    <location>
        <position position="18"/>
    </location>
</feature>
<feature type="mutagenesis site" description="No ClpA-ClpP, little ClpX-ClpP complex forms." evidence="4">
    <original>M</original>
    <variation>A</variation>
    <location>
        <position position="19"/>
    </location>
</feature>
<feature type="mutagenesis site" description="No ClpA-ClpP or ClpX-ClpP complex forms." evidence="4">
    <original>V</original>
    <variation>A</variation>
    <location>
        <position position="20"/>
    </location>
</feature>
<feature type="mutagenesis site" description="No ClpA-ClpP or ClpX-ClpP complex forms." evidence="4">
    <original>I</original>
    <variation>A</variation>
    <location>
        <position position="21"/>
    </location>
</feature>
<feature type="mutagenesis site" description="No ClpA-ClpP, little ClpX-ClpP complex forms." evidence="4">
    <original>T</original>
    <variation>A</variation>
    <location>
        <position position="24"/>
    </location>
</feature>
<feature type="mutagenesis site" description="No ClpA-ClpP, little ClpX-ClpP complex forms." evidence="4">
    <original>G</original>
    <variation>A</variation>
    <location>
        <position position="27"/>
    </location>
</feature>
<feature type="mutagenesis site" description="No ClpA-ClpP or ClpX-ClpP complex forms." evidence="4">
    <original>D</original>
    <variation>A</variation>
    <location>
        <position position="32"/>
    </location>
</feature>
<feature type="mutagenesis site" description="No ClpA-ClpP or ClpX-ClpP complex forms." evidence="4">
    <original>I</original>
    <variation>A</variation>
    <location>
        <position position="33"/>
    </location>
</feature>
<feature type="mutagenesis site" description="No ClpA-ClpP or ClpX-ClpP complex forms." evidence="4">
    <original>Y</original>
    <variation>A</variation>
    <location>
        <position position="34"/>
    </location>
</feature>
<feature type="mutagenesis site" description="Little ClpA-ClpP or ClpX-ClpP complex forms." evidence="4">
    <original>F</original>
    <variation>A</variation>
    <location>
        <position position="126"/>
    </location>
</feature>
<feature type="mutagenesis site" description="Loss of protease activity, forms ClpA-ClpP complex." evidence="4">
    <original>D</original>
    <variation>A</variation>
    <location>
        <position position="185"/>
    </location>
</feature>
<feature type="strand" evidence="16">
    <location>
        <begin position="19"/>
        <end position="21"/>
    </location>
</feature>
<feature type="strand" evidence="15">
    <location>
        <begin position="22"/>
        <end position="24"/>
    </location>
</feature>
<feature type="strand" evidence="18">
    <location>
        <begin position="25"/>
        <end position="27"/>
    </location>
</feature>
<feature type="strand" evidence="16">
    <location>
        <begin position="30"/>
        <end position="32"/>
    </location>
</feature>
<feature type="helix" evidence="15">
    <location>
        <begin position="33"/>
        <end position="38"/>
    </location>
</feature>
<feature type="turn" evidence="15">
    <location>
        <begin position="39"/>
        <end position="41"/>
    </location>
</feature>
<feature type="strand" evidence="15">
    <location>
        <begin position="42"/>
        <end position="49"/>
    </location>
</feature>
<feature type="helix" evidence="15">
    <location>
        <begin position="51"/>
        <end position="67"/>
    </location>
</feature>
<feature type="strand" evidence="15">
    <location>
        <begin position="69"/>
        <end position="71"/>
    </location>
</feature>
<feature type="strand" evidence="15">
    <location>
        <begin position="73"/>
        <end position="79"/>
    </location>
</feature>
<feature type="helix" evidence="15">
    <location>
        <begin position="84"/>
        <end position="96"/>
    </location>
</feature>
<feature type="strand" evidence="15">
    <location>
        <begin position="97"/>
        <end position="99"/>
    </location>
</feature>
<feature type="strand" evidence="15">
    <location>
        <begin position="101"/>
        <end position="110"/>
    </location>
</feature>
<feature type="helix" evidence="15">
    <location>
        <begin position="112"/>
        <end position="118"/>
    </location>
</feature>
<feature type="turn" evidence="19">
    <location>
        <begin position="122"/>
        <end position="124"/>
    </location>
</feature>
<feature type="strand" evidence="15">
    <location>
        <begin position="125"/>
        <end position="127"/>
    </location>
</feature>
<feature type="strand" evidence="15">
    <location>
        <begin position="132"/>
        <end position="135"/>
    </location>
</feature>
<feature type="strand" evidence="15">
    <location>
        <begin position="139"/>
        <end position="145"/>
    </location>
</feature>
<feature type="helix" evidence="15">
    <location>
        <begin position="146"/>
        <end position="171"/>
    </location>
</feature>
<feature type="helix" evidence="15">
    <location>
        <begin position="175"/>
        <end position="181"/>
    </location>
</feature>
<feature type="turn" evidence="17">
    <location>
        <begin position="182"/>
        <end position="185"/>
    </location>
</feature>
<feature type="strand" evidence="15">
    <location>
        <begin position="186"/>
        <end position="189"/>
    </location>
</feature>
<feature type="helix" evidence="15">
    <location>
        <begin position="190"/>
        <end position="195"/>
    </location>
</feature>
<feature type="strand" evidence="15">
    <location>
        <begin position="198"/>
        <end position="202"/>
    </location>
</feature>
<dbReference type="EC" id="3.4.21.92" evidence="1"/>
<dbReference type="EMBL" id="J05534">
    <property type="protein sequence ID" value="AAA23588.1"/>
    <property type="molecule type" value="Genomic_DNA"/>
</dbReference>
<dbReference type="EMBL" id="U82664">
    <property type="protein sequence ID" value="AAB40193.1"/>
    <property type="molecule type" value="Genomic_DNA"/>
</dbReference>
<dbReference type="EMBL" id="U00096">
    <property type="protein sequence ID" value="AAC73540.1"/>
    <property type="molecule type" value="Genomic_DNA"/>
</dbReference>
<dbReference type="EMBL" id="AP009048">
    <property type="protein sequence ID" value="BAE76217.1"/>
    <property type="molecule type" value="Genomic_DNA"/>
</dbReference>
<dbReference type="PIR" id="B36575">
    <property type="entry name" value="B36575"/>
</dbReference>
<dbReference type="RefSeq" id="NP_414971.1">
    <property type="nucleotide sequence ID" value="NC_000913.3"/>
</dbReference>
<dbReference type="RefSeq" id="WP_000122253.1">
    <property type="nucleotide sequence ID" value="NZ_STEB01000007.1"/>
</dbReference>
<dbReference type="PDB" id="1TYF">
    <property type="method" value="X-ray"/>
    <property type="resolution" value="2.30 A"/>
    <property type="chains" value="A/B/C/D/E/F/G/H/I/J/K/L/M/N=15-207"/>
</dbReference>
<dbReference type="PDB" id="1YG6">
    <property type="method" value="X-ray"/>
    <property type="resolution" value="1.90 A"/>
    <property type="chains" value="A/B/C/D/E/F/G/H/I/J/K/L/M/N=15-207"/>
</dbReference>
<dbReference type="PDB" id="1YG8">
    <property type="method" value="X-ray"/>
    <property type="resolution" value="2.60 A"/>
    <property type="chains" value="A/B/C/D/E/F/G/H/I/J/K/L/M/N/O/P/Q/R/S/T/U/V/W/X/Y/Z/a/b=18-207"/>
</dbReference>
<dbReference type="PDB" id="2FZS">
    <property type="method" value="X-ray"/>
    <property type="resolution" value="1.90 A"/>
    <property type="chains" value="A/B/C/D/E/F/G/H/I/J/K/L/M/N=15-207"/>
</dbReference>
<dbReference type="PDB" id="3HLN">
    <property type="method" value="X-ray"/>
    <property type="resolution" value="3.20 A"/>
    <property type="chains" value="1/2/A/B/C/D/E/F/G/H/I/J/K/L/M/N/O/P/Q/R/S/T/U/V/W/X/Y/Z=15-207"/>
</dbReference>
<dbReference type="PDB" id="3MT6">
    <property type="method" value="X-ray"/>
    <property type="resolution" value="1.90 A"/>
    <property type="chains" value="A/B/C/D/E/F/G/H/I/J/K/L/M/N/O/P/Q/R/S/T/U/V/W/X/Y/Z/a/b=1-207"/>
</dbReference>
<dbReference type="PDB" id="6NB1">
    <property type="method" value="X-ray"/>
    <property type="resolution" value="1.90 A"/>
    <property type="chains" value="A/B/C/D/E/F/G/H/I/J/K/L/M/N=1-207"/>
</dbReference>
<dbReference type="PDB" id="6PO1">
    <property type="method" value="EM"/>
    <property type="resolution" value="4.20 A"/>
    <property type="chains" value="H/I/J/K/L/M/N=1-207"/>
</dbReference>
<dbReference type="PDB" id="6PO3">
    <property type="method" value="EM"/>
    <property type="resolution" value="4.28 A"/>
    <property type="chains" value="H/I/J/K/L/M/N=1-207"/>
</dbReference>
<dbReference type="PDB" id="6POD">
    <property type="method" value="EM"/>
    <property type="resolution" value="4.05 A"/>
    <property type="chains" value="H/I/J/K/L/M/N=1-207"/>
</dbReference>
<dbReference type="PDB" id="6POS">
    <property type="method" value="EM"/>
    <property type="resolution" value="4.12 A"/>
    <property type="chains" value="H/I/J/K/L/M/N=1-207"/>
</dbReference>
<dbReference type="PDB" id="6PPE">
    <property type="method" value="EM"/>
    <property type="resolution" value="3.19 A"/>
    <property type="chains" value="A/B/C/D/E/F/G/H/I/J/K/L/M/N=16-207"/>
</dbReference>
<dbReference type="PDB" id="6UQE">
    <property type="method" value="EM"/>
    <property type="resolution" value="3.00 A"/>
    <property type="chains" value="G/H/I/J/K/L/M/N/O/P/Q/R/S/T=15-206"/>
</dbReference>
<dbReference type="PDB" id="6UQO">
    <property type="method" value="EM"/>
    <property type="resolution" value="3.10 A"/>
    <property type="chains" value="G/H/I/J/K/L/M/N/O/P/Q/R/S/T=15-206"/>
</dbReference>
<dbReference type="PDB" id="6W1Z">
    <property type="method" value="EM"/>
    <property type="resolution" value="2.70 A"/>
    <property type="chains" value="G/H/I/J/K/L/M/N/O/P/Q/R/S/T=1-207"/>
</dbReference>
<dbReference type="PDB" id="6W20">
    <property type="method" value="EM"/>
    <property type="resolution" value="3.00 A"/>
    <property type="chains" value="G/H/I/J/K/L/M/N/O/P/Q/R/S/T=1-207"/>
</dbReference>
<dbReference type="PDB" id="6W21">
    <property type="method" value="EM"/>
    <property type="resolution" value="3.30 A"/>
    <property type="chains" value="G/H/I/J/K/L/M/N/O/P/Q/R/S/T=1-207"/>
</dbReference>
<dbReference type="PDB" id="6WR2">
    <property type="method" value="EM"/>
    <property type="resolution" value="2.88 A"/>
    <property type="chains" value="H/I/J/K/L/M/N/h/i/j/k/l/m/n=16-207"/>
</dbReference>
<dbReference type="PDB" id="6WRF">
    <property type="method" value="EM"/>
    <property type="resolution" value="3.14 A"/>
    <property type="chains" value="H/I/J/K/L/M/N=16-207"/>
</dbReference>
<dbReference type="PDB" id="6WSG">
    <property type="method" value="EM"/>
    <property type="resolution" value="3.16 A"/>
    <property type="chains" value="H/I/J/K/L/M/N=16-207"/>
</dbReference>
<dbReference type="PDB" id="7MK5">
    <property type="method" value="X-ray"/>
    <property type="resolution" value="2.95 A"/>
    <property type="chains" value="A/B/C/D/E/F/G/H/I/J/K/L/M/N/O/P/Q/R/S/T/U/V/W/X/Y/Z/a/b=15-207"/>
</dbReference>
<dbReference type="PDB" id="7UIV">
    <property type="method" value="EM"/>
    <property type="resolution" value="3.38 A"/>
    <property type="chains" value="H/I/J/K/L/M/N=15-207"/>
</dbReference>
<dbReference type="PDB" id="7UIW">
    <property type="method" value="EM"/>
    <property type="resolution" value="3.33 A"/>
    <property type="chains" value="H/I/J/K/L/M/N=15-207"/>
</dbReference>
<dbReference type="PDB" id="7UIX">
    <property type="method" value="EM"/>
    <property type="resolution" value="3.24 A"/>
    <property type="chains" value="H/I/J/K/L/M/N=15-207"/>
</dbReference>
<dbReference type="PDB" id="7UIY">
    <property type="method" value="EM"/>
    <property type="resolution" value="3.22 A"/>
    <property type="chains" value="H/I/J/K/L/M/N=15-207"/>
</dbReference>
<dbReference type="PDB" id="7UIZ">
    <property type="method" value="EM"/>
    <property type="resolution" value="3.24 A"/>
    <property type="chains" value="H/I/J/K/L/M/N=15-207"/>
</dbReference>
<dbReference type="PDB" id="7UJ0">
    <property type="method" value="EM"/>
    <property type="resolution" value="3.26 A"/>
    <property type="chains" value="H/I/J/K/L/M/N=15-207"/>
</dbReference>
<dbReference type="PDB" id="8E7V">
    <property type="method" value="EM"/>
    <property type="resolution" value="3.10 A"/>
    <property type="chains" value="H/I/J/K/L/M/N/h/i/j/k/l/m/n=16-207"/>
</dbReference>
<dbReference type="PDB" id="8E8Q">
    <property type="method" value="EM"/>
    <property type="resolution" value="3.12 A"/>
    <property type="chains" value="H/I/J/K/L/M/N/h/i/j/k/l/m/n=16-207"/>
</dbReference>
<dbReference type="PDB" id="8E91">
    <property type="method" value="EM"/>
    <property type="resolution" value="2.57 A"/>
    <property type="chains" value="H/I/J/K/L/M/N/h/i/j/k/l/m/n=16-207"/>
</dbReference>
<dbReference type="PDB" id="8ET3">
    <property type="method" value="EM"/>
    <property type="resolution" value="3.70 A"/>
    <property type="chains" value="H/I/J/K/L/M/N=16-207"/>
</dbReference>
<dbReference type="PDB" id="8V9R">
    <property type="method" value="EM"/>
    <property type="resolution" value="2.80 A"/>
    <property type="chains" value="h/i/j/k/l/m/n/p/q/r/s/t/u/v=16-207"/>
</dbReference>
<dbReference type="PDB" id="9C87">
    <property type="method" value="EM"/>
    <property type="resolution" value="3.70 A"/>
    <property type="chains" value="h/i/j/k/l/m/n/p/q/r/s/t/u/v=16-207"/>
</dbReference>
<dbReference type="PDB" id="9C88">
    <property type="method" value="EM"/>
    <property type="resolution" value="2.60 A"/>
    <property type="chains" value="h/i/j/k/l/m/n/p/q/r/s/t/u/v=16-207"/>
</dbReference>
<dbReference type="PDBsum" id="1TYF"/>
<dbReference type="PDBsum" id="1YG6"/>
<dbReference type="PDBsum" id="1YG8"/>
<dbReference type="PDBsum" id="2FZS"/>
<dbReference type="PDBsum" id="3HLN"/>
<dbReference type="PDBsum" id="3MT6"/>
<dbReference type="PDBsum" id="6NB1"/>
<dbReference type="PDBsum" id="6PO1"/>
<dbReference type="PDBsum" id="6PO3"/>
<dbReference type="PDBsum" id="6POD"/>
<dbReference type="PDBsum" id="6POS"/>
<dbReference type="PDBsum" id="6PPE"/>
<dbReference type="PDBsum" id="6UQE"/>
<dbReference type="PDBsum" id="6UQO"/>
<dbReference type="PDBsum" id="6W1Z"/>
<dbReference type="PDBsum" id="6W20"/>
<dbReference type="PDBsum" id="6W21"/>
<dbReference type="PDBsum" id="6WR2"/>
<dbReference type="PDBsum" id="6WRF"/>
<dbReference type="PDBsum" id="6WSG"/>
<dbReference type="PDBsum" id="7MK5"/>
<dbReference type="PDBsum" id="7UIV"/>
<dbReference type="PDBsum" id="7UIW"/>
<dbReference type="PDBsum" id="7UIX"/>
<dbReference type="PDBsum" id="7UIY"/>
<dbReference type="PDBsum" id="7UIZ"/>
<dbReference type="PDBsum" id="7UJ0"/>
<dbReference type="PDBsum" id="8E7V"/>
<dbReference type="PDBsum" id="8E8Q"/>
<dbReference type="PDBsum" id="8E91"/>
<dbReference type="PDBsum" id="8ET3"/>
<dbReference type="PDBsum" id="8V9R"/>
<dbReference type="PDBsum" id="9C87"/>
<dbReference type="PDBsum" id="9C88"/>
<dbReference type="EMDB" id="EMD-21875"/>
<dbReference type="EMDB" id="EMD-21882"/>
<dbReference type="EMDB" id="EMD-21892"/>
<dbReference type="EMDB" id="EMD-27941"/>
<dbReference type="EMDB" id="EMD-27946"/>
<dbReference type="EMDB" id="EMD-27952"/>
<dbReference type="EMDB" id="EMD-28585"/>
<dbReference type="EMDB" id="EMD-43081"/>
<dbReference type="EMDB" id="EMD-45299"/>
<dbReference type="EMDB" id="EMD-45300"/>
<dbReference type="SMR" id="P0A6G7"/>
<dbReference type="BioGRID" id="4260736">
    <property type="interactions" value="482"/>
</dbReference>
<dbReference type="BioGRID" id="849471">
    <property type="interactions" value="1"/>
</dbReference>
<dbReference type="ComplexPortal" id="CPX-3175">
    <property type="entry name" value="Endopeptidase ClpAP complex"/>
</dbReference>
<dbReference type="ComplexPortal" id="CPX-3176">
    <property type="entry name" value="Endopeptidase ClpXP complex"/>
</dbReference>
<dbReference type="ComplexPortal" id="CPX-3178">
    <property type="entry name" value="Endopeptidase ClpP complex"/>
</dbReference>
<dbReference type="DIP" id="DIP-31838N"/>
<dbReference type="FunCoup" id="P0A6G7">
    <property type="interactions" value="728"/>
</dbReference>
<dbReference type="IntAct" id="P0A6G7">
    <property type="interactions" value="68"/>
</dbReference>
<dbReference type="STRING" id="511145.b0437"/>
<dbReference type="BindingDB" id="P0A6G7"/>
<dbReference type="ChEMBL" id="CHEMBL3341578"/>
<dbReference type="DrugBank" id="DB07571">
    <property type="generic name" value="N~2~-[(BENZYLOXY)CARBONYL]-N-[(1S,2S)-2-HYDROXY-1-(4-HYDROXYBENZYL)PROPYL]-L-LEUCINAMIDE"/>
</dbReference>
<dbReference type="MEROPS" id="S14.001"/>
<dbReference type="jPOST" id="P0A6G7"/>
<dbReference type="PaxDb" id="511145-b0437"/>
<dbReference type="EnsemblBacteria" id="AAC73540">
    <property type="protein sequence ID" value="AAC73540"/>
    <property type="gene ID" value="b0437"/>
</dbReference>
<dbReference type="GeneID" id="93777017"/>
<dbReference type="GeneID" id="945082"/>
<dbReference type="KEGG" id="ecj:JW0427"/>
<dbReference type="KEGG" id="eco:b0437"/>
<dbReference type="KEGG" id="ecoc:C3026_02140"/>
<dbReference type="PATRIC" id="fig|1411691.4.peg.1839"/>
<dbReference type="EchoBASE" id="EB0156"/>
<dbReference type="eggNOG" id="COG0740">
    <property type="taxonomic scope" value="Bacteria"/>
</dbReference>
<dbReference type="HOGENOM" id="CLU_058707_3_2_6"/>
<dbReference type="InParanoid" id="P0A6G7"/>
<dbReference type="OMA" id="RDYWMKA"/>
<dbReference type="OrthoDB" id="9802800at2"/>
<dbReference type="PhylomeDB" id="P0A6G7"/>
<dbReference type="BioCyc" id="EcoCyc:EG10158-MONOMER"/>
<dbReference type="BioCyc" id="MetaCyc:EG10158-MONOMER"/>
<dbReference type="BRENDA" id="3.4.21.92">
    <property type="organism ID" value="2026"/>
</dbReference>
<dbReference type="EvolutionaryTrace" id="P0A6G7"/>
<dbReference type="PRO" id="PR:P0A6G7"/>
<dbReference type="Proteomes" id="UP000000625">
    <property type="component" value="Chromosome"/>
</dbReference>
<dbReference type="GO" id="GO:0005829">
    <property type="term" value="C:cytosol"/>
    <property type="evidence" value="ECO:0007005"/>
    <property type="project" value="UniProtKB"/>
</dbReference>
<dbReference type="GO" id="GO:0009368">
    <property type="term" value="C:endopeptidase Clp complex"/>
    <property type="evidence" value="ECO:0000353"/>
    <property type="project" value="ComplexPortal"/>
</dbReference>
<dbReference type="GO" id="GO:0009376">
    <property type="term" value="C:HslUV protease complex"/>
    <property type="evidence" value="ECO:0000314"/>
    <property type="project" value="CAFA"/>
</dbReference>
<dbReference type="GO" id="GO:0016020">
    <property type="term" value="C:membrane"/>
    <property type="evidence" value="ECO:0007005"/>
    <property type="project" value="UniProtKB"/>
</dbReference>
<dbReference type="GO" id="GO:0004176">
    <property type="term" value="F:ATP-dependent peptidase activity"/>
    <property type="evidence" value="ECO:0000314"/>
    <property type="project" value="CAFA"/>
</dbReference>
<dbReference type="GO" id="GO:0051117">
    <property type="term" value="F:ATPase binding"/>
    <property type="evidence" value="ECO:0000353"/>
    <property type="project" value="CAFA"/>
</dbReference>
<dbReference type="GO" id="GO:0042802">
    <property type="term" value="F:identical protein binding"/>
    <property type="evidence" value="ECO:0000353"/>
    <property type="project" value="IntAct"/>
</dbReference>
<dbReference type="GO" id="GO:0004252">
    <property type="term" value="F:serine-type endopeptidase activity"/>
    <property type="evidence" value="ECO:0000318"/>
    <property type="project" value="GO_Central"/>
</dbReference>
<dbReference type="GO" id="GO:0008236">
    <property type="term" value="F:serine-type peptidase activity"/>
    <property type="evidence" value="ECO:0000314"/>
    <property type="project" value="EcoCyc"/>
</dbReference>
<dbReference type="GO" id="GO:0043068">
    <property type="term" value="P:positive regulation of programmed cell death"/>
    <property type="evidence" value="ECO:0000315"/>
    <property type="project" value="CACAO"/>
</dbReference>
<dbReference type="GO" id="GO:0010498">
    <property type="term" value="P:proteasomal protein catabolic process"/>
    <property type="evidence" value="ECO:0000315"/>
    <property type="project" value="CACAO"/>
</dbReference>
<dbReference type="GO" id="GO:0006515">
    <property type="term" value="P:protein quality control for misfolded or incompletely synthesized proteins"/>
    <property type="evidence" value="ECO:0000314"/>
    <property type="project" value="MGI"/>
</dbReference>
<dbReference type="GO" id="GO:0006508">
    <property type="term" value="P:proteolysis"/>
    <property type="evidence" value="ECO:0000314"/>
    <property type="project" value="CAFA"/>
</dbReference>
<dbReference type="GO" id="GO:0009408">
    <property type="term" value="P:response to heat"/>
    <property type="evidence" value="ECO:0000270"/>
    <property type="project" value="EcoliWiki"/>
</dbReference>
<dbReference type="GO" id="GO:0009314">
    <property type="term" value="P:response to radiation"/>
    <property type="evidence" value="ECO:0000315"/>
    <property type="project" value="EcoCyc"/>
</dbReference>
<dbReference type="GO" id="GO:0009266">
    <property type="term" value="P:response to temperature stimulus"/>
    <property type="evidence" value="ECO:0000269"/>
    <property type="project" value="EcoCyc"/>
</dbReference>
<dbReference type="CDD" id="cd07017">
    <property type="entry name" value="S14_ClpP_2"/>
    <property type="match status" value="1"/>
</dbReference>
<dbReference type="FunFam" id="3.90.226.10:FF:000001">
    <property type="entry name" value="ATP-dependent Clp protease proteolytic subunit"/>
    <property type="match status" value="1"/>
</dbReference>
<dbReference type="Gene3D" id="3.90.226.10">
    <property type="entry name" value="2-enoyl-CoA Hydratase, Chain A, domain 1"/>
    <property type="match status" value="1"/>
</dbReference>
<dbReference type="HAMAP" id="MF_00444">
    <property type="entry name" value="ClpP"/>
    <property type="match status" value="1"/>
</dbReference>
<dbReference type="InterPro" id="IPR001907">
    <property type="entry name" value="ClpP"/>
</dbReference>
<dbReference type="InterPro" id="IPR029045">
    <property type="entry name" value="ClpP/crotonase-like_dom_sf"/>
</dbReference>
<dbReference type="InterPro" id="IPR023562">
    <property type="entry name" value="ClpP/TepA"/>
</dbReference>
<dbReference type="InterPro" id="IPR033135">
    <property type="entry name" value="ClpP_His_AS"/>
</dbReference>
<dbReference type="InterPro" id="IPR018215">
    <property type="entry name" value="ClpP_Ser_AS"/>
</dbReference>
<dbReference type="NCBIfam" id="TIGR00493">
    <property type="entry name" value="clpP"/>
    <property type="match status" value="1"/>
</dbReference>
<dbReference type="NCBIfam" id="NF001368">
    <property type="entry name" value="PRK00277.1"/>
    <property type="match status" value="1"/>
</dbReference>
<dbReference type="NCBIfam" id="NF009205">
    <property type="entry name" value="PRK12553.1"/>
    <property type="match status" value="1"/>
</dbReference>
<dbReference type="PANTHER" id="PTHR10381">
    <property type="entry name" value="ATP-DEPENDENT CLP PROTEASE PROTEOLYTIC SUBUNIT"/>
    <property type="match status" value="1"/>
</dbReference>
<dbReference type="PANTHER" id="PTHR10381:SF70">
    <property type="entry name" value="ATP-DEPENDENT CLP PROTEASE PROTEOLYTIC SUBUNIT"/>
    <property type="match status" value="1"/>
</dbReference>
<dbReference type="Pfam" id="PF00574">
    <property type="entry name" value="CLP_protease"/>
    <property type="match status" value="1"/>
</dbReference>
<dbReference type="PRINTS" id="PR00127">
    <property type="entry name" value="CLPPROTEASEP"/>
</dbReference>
<dbReference type="SUPFAM" id="SSF52096">
    <property type="entry name" value="ClpP/crotonase"/>
    <property type="match status" value="1"/>
</dbReference>
<dbReference type="PROSITE" id="PS00382">
    <property type="entry name" value="CLP_PROTEASE_HIS"/>
    <property type="match status" value="1"/>
</dbReference>
<dbReference type="PROSITE" id="PS00381">
    <property type="entry name" value="CLP_PROTEASE_SER"/>
    <property type="match status" value="1"/>
</dbReference>
<reference key="1">
    <citation type="journal article" date="1990" name="J. Biol. Chem.">
        <title>Sequence and structure of Clp P, the proteolytic component of the ATP-dependent Clp protease of Escherichia coli.</title>
        <authorList>
            <person name="Maurizi M.R."/>
            <person name="Clark W.P."/>
            <person name="Katayama Y."/>
            <person name="Rudikoff S."/>
            <person name="Pumphrey J."/>
            <person name="Bowers B."/>
            <person name="Gottesman S."/>
        </authorList>
    </citation>
    <scope>NUCLEOTIDE SEQUENCE [GENOMIC DNA]</scope>
    <scope>PROTEIN SEQUENCE OF 15-36</scope>
</reference>
<reference key="2">
    <citation type="submission" date="1997-01" db="EMBL/GenBank/DDBJ databases">
        <title>Sequence of minutes 4-25 of Escherichia coli.</title>
        <authorList>
            <person name="Chung E."/>
            <person name="Allen E."/>
            <person name="Araujo R."/>
            <person name="Aparicio A.M."/>
            <person name="Davis K."/>
            <person name="Duncan M."/>
            <person name="Federspiel N."/>
            <person name="Hyman R."/>
            <person name="Kalman S."/>
            <person name="Komp C."/>
            <person name="Kurdi O."/>
            <person name="Lew H."/>
            <person name="Lin D."/>
            <person name="Namath A."/>
            <person name="Oefner P."/>
            <person name="Roberts D."/>
            <person name="Schramm S."/>
            <person name="Davis R.W."/>
        </authorList>
    </citation>
    <scope>NUCLEOTIDE SEQUENCE [LARGE SCALE GENOMIC DNA]</scope>
    <source>
        <strain>K12 / MG1655 / ATCC 47076</strain>
    </source>
</reference>
<reference key="3">
    <citation type="journal article" date="1997" name="Science">
        <title>The complete genome sequence of Escherichia coli K-12.</title>
        <authorList>
            <person name="Blattner F.R."/>
            <person name="Plunkett G. III"/>
            <person name="Bloch C.A."/>
            <person name="Perna N.T."/>
            <person name="Burland V."/>
            <person name="Riley M."/>
            <person name="Collado-Vides J."/>
            <person name="Glasner J.D."/>
            <person name="Rode C.K."/>
            <person name="Mayhew G.F."/>
            <person name="Gregor J."/>
            <person name="Davis N.W."/>
            <person name="Kirkpatrick H.A."/>
            <person name="Goeden M.A."/>
            <person name="Rose D.J."/>
            <person name="Mau B."/>
            <person name="Shao Y."/>
        </authorList>
    </citation>
    <scope>NUCLEOTIDE SEQUENCE [LARGE SCALE GENOMIC DNA]</scope>
    <source>
        <strain>K12 / MG1655 / ATCC 47076</strain>
    </source>
</reference>
<reference key="4">
    <citation type="journal article" date="2006" name="Mol. Syst. Biol.">
        <title>Highly accurate genome sequences of Escherichia coli K-12 strains MG1655 and W3110.</title>
        <authorList>
            <person name="Hayashi K."/>
            <person name="Morooka N."/>
            <person name="Yamamoto Y."/>
            <person name="Fujita K."/>
            <person name="Isono K."/>
            <person name="Choi S."/>
            <person name="Ohtsubo E."/>
            <person name="Baba T."/>
            <person name="Wanner B.L."/>
            <person name="Mori H."/>
            <person name="Horiuchi T."/>
        </authorList>
    </citation>
    <scope>NUCLEOTIDE SEQUENCE [LARGE SCALE GENOMIC DNA]</scope>
    <source>
        <strain>K12 / W3110 / ATCC 27325 / DSM 5911</strain>
    </source>
</reference>
<reference key="5">
    <citation type="journal article" date="1990" name="J. Bacteriol.">
        <title>The ClpP component of Clp protease is the sigma 32-dependent heat shock protein F21.5.</title>
        <authorList>
            <person name="Kroh H.E."/>
            <person name="Simon L.D."/>
        </authorList>
    </citation>
    <scope>IDENTIFICATION AS A HEAT SHOCK PROTEIN</scope>
</reference>
<reference key="6">
    <citation type="journal article" date="1993" name="J. Biol. Chem.">
        <title>A comparative study of the chymotrypsin-like activity of the rat liver multicatalytic proteinase and the ClpP from Escherichia coli.</title>
        <authorList>
            <person name="Arribas J."/>
            <person name="Castano J.G."/>
        </authorList>
    </citation>
    <scope>CHARACTERIZATION</scope>
</reference>
<reference key="7">
    <citation type="journal article" date="1994" name="Biochem. Biophys. Res. Commun.">
        <title>clpX encoding an alternative ATP-binding subunit of protease Ti (Clp) can be expressed independently from clpP in Escherichia coli.</title>
        <authorList>
            <person name="Yoo S.J."/>
            <person name="Seol J.H."/>
            <person name="Kang M.S."/>
            <person name="Ha D.B."/>
            <person name="Chung C.H."/>
        </authorList>
    </citation>
    <scope>INDUCTION</scope>
    <scope>OPERON</scope>
</reference>
<reference key="8">
    <citation type="journal article" date="1997" name="Electrophoresis">
        <title>Escherichia coli proteome analysis using the gene-protein database.</title>
        <authorList>
            <person name="VanBogelen R.A."/>
            <person name="Abshire K.Z."/>
            <person name="Moldover B."/>
            <person name="Olson E.R."/>
            <person name="Neidhardt F.C."/>
        </authorList>
    </citation>
    <scope>IDENTIFICATION BY 2D-GEL</scope>
</reference>
<reference key="9">
    <citation type="journal article" date="2003" name="Cell">
        <title>Linkage between ATP consumption and mechanical unfolding during the protein processing reactions of an AAA+ degradation machine.</title>
        <authorList>
            <person name="Kenniston J.A."/>
            <person name="Baker T.A."/>
            <person name="Fernandez J.M."/>
            <person name="Sauer R.T."/>
        </authorList>
    </citation>
    <scope>FUNCTION</scope>
</reference>
<reference key="10">
    <citation type="journal article" date="2004" name="Genes Dev.">
        <title>Modulating substrate choice: the SspB adaptor delivers a regulator of the extracytoplasmic-stress response to the AAA+ protease ClpXP for degradation.</title>
        <authorList>
            <person name="Flynn J.M."/>
            <person name="Levchenko I."/>
            <person name="Sauer R.T."/>
            <person name="Baker T.A."/>
        </authorList>
    </citation>
    <scope>FUNCTION</scope>
    <scope>SUBSTRATE</scope>
</reference>
<reference key="11">
    <citation type="journal article" date="2012" name="PLoS Biol.">
        <title>Two programmed cell death systems in Escherichia coli: an apoptotic-like death is inhibited by the mazEF-mediated death pathway.</title>
        <authorList>
            <person name="Erental A."/>
            <person name="Sharon I."/>
            <person name="Engelberg-Kulka H."/>
        </authorList>
    </citation>
    <scope>DISRUPTION PHENOTYPE</scope>
    <source>
        <strain>K12 / MC4100 / ATCC 35695 / DSM 6574</strain>
    </source>
</reference>
<reference key="12">
    <citation type="journal article" date="2014" name="J. Biol. Chem.">
        <title>MazF-induced growth inhibition and persister generation in Escherichia coli.</title>
        <authorList>
            <person name="Tripathi A."/>
            <person name="Dewan P.C."/>
            <person name="Siddique S.A."/>
            <person name="Varadarajan R."/>
        </authorList>
    </citation>
    <scope>CLEAVAGE OF ANTITOXIN MAZE</scope>
    <scope>DISRUPTION PHENOTYPE</scope>
    <source>
        <strain>K12 / BW25113</strain>
        <strain>K12 / MC4100 / ATCC 35695 / DSM 6574</strain>
    </source>
</reference>
<reference key="13">
    <citation type="journal article" date="1996" name="J. Mol. Biol.">
        <title>Molecular symmetry of the ClpP component of the ATP-dependent Clp protease, an Escherichia coli homolog of 20 S proteasome.</title>
        <authorList>
            <person name="Shin D.H."/>
            <person name="Lee C.S."/>
            <person name="Chung C.H."/>
            <person name="Suh S.W."/>
        </authorList>
    </citation>
    <scope>X-RAY CRYSTALLOGRAPHY (2.5 ANGSTROMS)</scope>
</reference>
<reference key="14">
    <citation type="journal article" date="1997" name="Cell">
        <title>The structure of ClpP at 2.3-A resolution suggests a model for ATP-dependent proteolysis.</title>
        <authorList>
            <person name="Wang J."/>
            <person name="Hartling J.A."/>
            <person name="Flanagan J.M."/>
        </authorList>
    </citation>
    <scope>X-RAY CRYSTALLOGRAPHY (2.3 ANGSTROMS) OF 15-207</scope>
    <scope>SUBUNIT</scope>
</reference>
<reference key="15">
    <citation type="journal article" date="2006" name="J. Struct. Biol.">
        <title>The asymmetry in the mature amino-terminus of ClpP facilitates a local symmetry match in ClpAP and ClpXP complexes.</title>
        <authorList>
            <person name="Bewley M.C."/>
            <person name="Graziano V."/>
            <person name="Griffin K."/>
            <person name="Flanagan J.M."/>
        </authorList>
    </citation>
    <scope>X-RAY CRYSTALLOGRAPHY (1.90 ANGSTROMS) OF 15-207</scope>
    <scope>BIOPHYSICOCHEMICAL PROPERTIES</scope>
    <scope>SUBUNIT</scope>
    <scope>DOMAIN</scope>
    <scope>MUTAGENESIS OF VAL-17; PRO-18; MET-19; VAL-20; ILE-21; THR-24; GLY-27; ASP-32; ILE-33; TYR-34; PHE-126 AND ASP-185</scope>
</reference>
<reference key="16">
    <citation type="journal article" date="2006" name="J. Struct. Biol.">
        <title>Crystal structure at 1.9 A of E. coli ClpP with a peptide covalently bound at the active site.</title>
        <authorList>
            <person name="Szyk A."/>
            <person name="Maurizi M.R."/>
        </authorList>
    </citation>
    <scope>X-RAY CRYSTALLOGRAPHY (1.90 ANGSTROMS) OF 15-207 BOUND TO INHIBITOR</scope>
    <scope>ACTIVITY REGULATION</scope>
    <scope>SUBUNIT</scope>
</reference>
<reference key="17">
    <citation type="journal article" date="2010" name="Chem. Biol.">
        <title>Acyldepsipeptide antibiotics induce the formation of a structured axial channel in ClpP: A model for the ClpX/ClpA-bound state of ClpP.</title>
        <authorList>
            <person name="Li D.H."/>
            <person name="Chung Y.S."/>
            <person name="Gloyd M."/>
            <person name="Joseph E."/>
            <person name="Ghirlando R."/>
            <person name="Wright G.D."/>
            <person name="Cheng Y.Q."/>
            <person name="Maurizi M.R."/>
            <person name="Guarne A."/>
            <person name="Ortega J."/>
        </authorList>
    </citation>
    <scope>X-RAY CRYSTALLOGRAPHY (1.90 ANGSTROMS) IN COMPLEX WITH ANTIBIOTIC</scope>
    <scope>SUBUNIT</scope>
</reference>
<reference key="18">
    <citation type="journal article" date="2010" name="Structure">
        <title>Structural and theoretical studies indicate that the cylindrical protease ClpP samples extended and compact conformations.</title>
        <authorList>
            <person name="Kimber M.S."/>
            <person name="Yu A.Y."/>
            <person name="Borg M."/>
            <person name="Leung E."/>
            <person name="Chan H.S."/>
            <person name="Houry W.A."/>
        </authorList>
    </citation>
    <scope>X-RAY CRYSTALLOGRAPHY (3.20 ANGSTROMS) OF 15-207</scope>
    <scope>BIOPHYSICOCHEMICAL PROPERTIES</scope>
    <scope>SUBUNIT</scope>
</reference>
<organism>
    <name type="scientific">Escherichia coli (strain K12)</name>
    <dbReference type="NCBI Taxonomy" id="83333"/>
    <lineage>
        <taxon>Bacteria</taxon>
        <taxon>Pseudomonadati</taxon>
        <taxon>Pseudomonadota</taxon>
        <taxon>Gammaproteobacteria</taxon>
        <taxon>Enterobacterales</taxon>
        <taxon>Enterobacteriaceae</taxon>
        <taxon>Escherichia</taxon>
    </lineage>
</organism>